<name>NQRF_CHLTA</name>
<evidence type="ECO:0000255" key="1">
    <source>
        <dbReference type="HAMAP-Rule" id="MF_00430"/>
    </source>
</evidence>
<protein>
    <recommendedName>
        <fullName evidence="1">Na(+)-translocating NADH-quinone reductase subunit F</fullName>
        <shortName evidence="1">Na(+)-NQR subunit F</shortName>
        <shortName evidence="1">Na(+)-translocating NQR subunit F</shortName>
        <ecNumber evidence="1">7.2.1.1</ecNumber>
    </recommendedName>
    <alternativeName>
        <fullName evidence="1">NQR complex subunit F</fullName>
    </alternativeName>
    <alternativeName>
        <fullName evidence="1">NQR-1 subunit F</fullName>
    </alternativeName>
</protein>
<accession>Q3KKV3</accession>
<comment type="function">
    <text evidence="1">NQR complex catalyzes the reduction of ubiquinone-1 to ubiquinol by two successive reactions, coupled with the transport of Na(+) ions from the cytoplasm to the periplasm. The first step is catalyzed by NqrF, which accepts electrons from NADH and reduces ubiquinone-1 to ubisemiquinone by a one-electron transfer pathway.</text>
</comment>
<comment type="catalytic activity">
    <reaction evidence="1">
        <text>a ubiquinone + n Na(+)(in) + NADH + H(+) = a ubiquinol + n Na(+)(out) + NAD(+)</text>
        <dbReference type="Rhea" id="RHEA:47748"/>
        <dbReference type="Rhea" id="RHEA-COMP:9565"/>
        <dbReference type="Rhea" id="RHEA-COMP:9566"/>
        <dbReference type="ChEBI" id="CHEBI:15378"/>
        <dbReference type="ChEBI" id="CHEBI:16389"/>
        <dbReference type="ChEBI" id="CHEBI:17976"/>
        <dbReference type="ChEBI" id="CHEBI:29101"/>
        <dbReference type="ChEBI" id="CHEBI:57540"/>
        <dbReference type="ChEBI" id="CHEBI:57945"/>
        <dbReference type="EC" id="7.2.1.1"/>
    </reaction>
</comment>
<comment type="cofactor">
    <cofactor evidence="1">
        <name>[2Fe-2S] cluster</name>
        <dbReference type="ChEBI" id="CHEBI:190135"/>
    </cofactor>
    <text evidence="1">Binds 1 [2Fe-2S] cluster.</text>
</comment>
<comment type="cofactor">
    <cofactor evidence="1">
        <name>FAD</name>
        <dbReference type="ChEBI" id="CHEBI:57692"/>
    </cofactor>
</comment>
<comment type="subunit">
    <text evidence="1">Composed of six subunits; NqrA, NqrB, NqrC, NqrD, NqrE and NqrF.</text>
</comment>
<comment type="subcellular location">
    <subcellularLocation>
        <location evidence="1">Cell inner membrane</location>
        <topology evidence="1">Single-pass membrane protein</topology>
    </subcellularLocation>
</comment>
<comment type="similarity">
    <text evidence="1">Belongs to the NqrF family.</text>
</comment>
<feature type="chain" id="PRO_1000080575" description="Na(+)-translocating NADH-quinone reductase subunit F">
    <location>
        <begin position="1"/>
        <end position="431"/>
    </location>
</feature>
<feature type="transmembrane region" description="Helical" evidence="1">
    <location>
        <begin position="10"/>
        <end position="30"/>
    </location>
</feature>
<feature type="domain" description="2Fe-2S ferredoxin-type" evidence="1">
    <location>
        <begin position="41"/>
        <end position="133"/>
    </location>
</feature>
<feature type="domain" description="FAD-binding FR-type" evidence="1">
    <location>
        <begin position="136"/>
        <end position="286"/>
    </location>
</feature>
<feature type="binding site" evidence="1">
    <location>
        <position position="76"/>
    </location>
    <ligand>
        <name>[2Fe-2S] cluster</name>
        <dbReference type="ChEBI" id="CHEBI:190135"/>
    </ligand>
</feature>
<feature type="binding site" evidence="1">
    <location>
        <position position="82"/>
    </location>
    <ligand>
        <name>[2Fe-2S] cluster</name>
        <dbReference type="ChEBI" id="CHEBI:190135"/>
    </ligand>
</feature>
<feature type="binding site" evidence="1">
    <location>
        <position position="85"/>
    </location>
    <ligand>
        <name>[2Fe-2S] cluster</name>
        <dbReference type="ChEBI" id="CHEBI:190135"/>
    </ligand>
</feature>
<feature type="binding site" evidence="1">
    <location>
        <position position="117"/>
    </location>
    <ligand>
        <name>[2Fe-2S] cluster</name>
        <dbReference type="ChEBI" id="CHEBI:190135"/>
    </ligand>
</feature>
<gene>
    <name evidence="1" type="primary">nqrF</name>
    <name type="ordered locus">CTA_0806</name>
</gene>
<organism>
    <name type="scientific">Chlamydia trachomatis serovar A (strain ATCC VR-571B / DSM 19440 / HAR-13)</name>
    <dbReference type="NCBI Taxonomy" id="315277"/>
    <lineage>
        <taxon>Bacteria</taxon>
        <taxon>Pseudomonadati</taxon>
        <taxon>Chlamydiota</taxon>
        <taxon>Chlamydiia</taxon>
        <taxon>Chlamydiales</taxon>
        <taxon>Chlamydiaceae</taxon>
        <taxon>Chlamydia/Chlamydophila group</taxon>
        <taxon>Chlamydia</taxon>
    </lineage>
</organism>
<sequence length="431" mass="48626">MTWLSGLYSIFVASAAFCSLGLILVAVILLSRKFLIKVHPCKLKINNDDSLTKTVDSGKTLLSSLLDSGIAIPSPCGGKAACKQCKVRITKNADEPLETDRSTFSKQQLEQGWRLSCQTKVQHDLCLEVEERYFNASSWEGTVVSNENVATFIKELVLSVDPSRPIPFKPGGYLQITVPPYKTNTSDWKQTMDPQYYSDWETFHLFDQVIDNLSLDTDSANKAYSLASYPAELPLIKFNVRIATPPFVDQAPDPTIPWGVCSSYIFSLKPGDKVMISGPYGESFMKEDNRPVIFLIGGAGSSFGRSHILDLLLNKHSDRELTLWYGARSLKENIYQEEYEKLEKEFPNFHYHLVLSQPLQEDLDQGWDKNDPIKTNFLFKAFELRQLSHLPNPEDYLYYVCGPALHNSSILTLLDNYGIERSSIVLDDFGS</sequence>
<reference key="1">
    <citation type="journal article" date="2005" name="Infect. Immun.">
        <title>Comparative genomic analysis of Chlamydia trachomatis oculotropic and genitotropic strains.</title>
        <authorList>
            <person name="Carlson J.H."/>
            <person name="Porcella S.F."/>
            <person name="McClarty G."/>
            <person name="Caldwell H.D."/>
        </authorList>
    </citation>
    <scope>NUCLEOTIDE SEQUENCE [LARGE SCALE GENOMIC DNA]</scope>
    <source>
        <strain>ATCC VR-571B / DSM 19440 / HAR-13</strain>
    </source>
</reference>
<dbReference type="EC" id="7.2.1.1" evidence="1"/>
<dbReference type="EMBL" id="CP000051">
    <property type="protein sequence ID" value="AAX51019.1"/>
    <property type="molecule type" value="Genomic_DNA"/>
</dbReference>
<dbReference type="RefSeq" id="WP_009872118.1">
    <property type="nucleotide sequence ID" value="NC_007429.1"/>
</dbReference>
<dbReference type="SMR" id="Q3KKV3"/>
<dbReference type="KEGG" id="cta:CTA_0806"/>
<dbReference type="HOGENOM" id="CLU_003827_7_2_0"/>
<dbReference type="Proteomes" id="UP000002532">
    <property type="component" value="Chromosome"/>
</dbReference>
<dbReference type="GO" id="GO:0005886">
    <property type="term" value="C:plasma membrane"/>
    <property type="evidence" value="ECO:0007669"/>
    <property type="project" value="UniProtKB-SubCell"/>
</dbReference>
<dbReference type="GO" id="GO:0051537">
    <property type="term" value="F:2 iron, 2 sulfur cluster binding"/>
    <property type="evidence" value="ECO:0007669"/>
    <property type="project" value="UniProtKB-KW"/>
</dbReference>
<dbReference type="GO" id="GO:0009055">
    <property type="term" value="F:electron transfer activity"/>
    <property type="evidence" value="ECO:0007669"/>
    <property type="project" value="UniProtKB-UniRule"/>
</dbReference>
<dbReference type="GO" id="GO:0046872">
    <property type="term" value="F:metal ion binding"/>
    <property type="evidence" value="ECO:0007669"/>
    <property type="project" value="UniProtKB-KW"/>
</dbReference>
<dbReference type="GO" id="GO:0016655">
    <property type="term" value="F:oxidoreductase activity, acting on NAD(P)H, quinone or similar compound as acceptor"/>
    <property type="evidence" value="ECO:0007669"/>
    <property type="project" value="InterPro"/>
</dbReference>
<dbReference type="GO" id="GO:0006814">
    <property type="term" value="P:sodium ion transport"/>
    <property type="evidence" value="ECO:0007669"/>
    <property type="project" value="UniProtKB-UniRule"/>
</dbReference>
<dbReference type="CDD" id="cd00207">
    <property type="entry name" value="fer2"/>
    <property type="match status" value="1"/>
</dbReference>
<dbReference type="CDD" id="cd06188">
    <property type="entry name" value="NADH_quinone_reductase"/>
    <property type="match status" value="1"/>
</dbReference>
<dbReference type="Gene3D" id="3.10.20.30">
    <property type="match status" value="1"/>
</dbReference>
<dbReference type="Gene3D" id="3.40.50.80">
    <property type="entry name" value="Nucleotide-binding domain of ferredoxin-NADP reductase (FNR) module"/>
    <property type="match status" value="1"/>
</dbReference>
<dbReference type="Gene3D" id="2.40.30.10">
    <property type="entry name" value="Translation factors"/>
    <property type="match status" value="1"/>
</dbReference>
<dbReference type="HAMAP" id="MF_00430">
    <property type="entry name" value="NqrF"/>
    <property type="match status" value="1"/>
</dbReference>
<dbReference type="InterPro" id="IPR036010">
    <property type="entry name" value="2Fe-2S_ferredoxin-like_sf"/>
</dbReference>
<dbReference type="InterPro" id="IPR001041">
    <property type="entry name" value="2Fe-2S_ferredoxin-type"/>
</dbReference>
<dbReference type="InterPro" id="IPR012675">
    <property type="entry name" value="Beta-grasp_dom_sf"/>
</dbReference>
<dbReference type="InterPro" id="IPR017927">
    <property type="entry name" value="FAD-bd_FR_type"/>
</dbReference>
<dbReference type="InterPro" id="IPR039261">
    <property type="entry name" value="FNR_nucleotide-bd"/>
</dbReference>
<dbReference type="InterPro" id="IPR010205">
    <property type="entry name" value="NqrF"/>
</dbReference>
<dbReference type="InterPro" id="IPR001433">
    <property type="entry name" value="OxRdtase_FAD/NAD-bd"/>
</dbReference>
<dbReference type="InterPro" id="IPR017938">
    <property type="entry name" value="Riboflavin_synthase-like_b-brl"/>
</dbReference>
<dbReference type="NCBIfam" id="TIGR01941">
    <property type="entry name" value="nqrF"/>
    <property type="match status" value="1"/>
</dbReference>
<dbReference type="PANTHER" id="PTHR43644">
    <property type="entry name" value="NA(+)-TRANSLOCATING NADH-QUINONE REDUCTASE SUBUNIT"/>
    <property type="match status" value="1"/>
</dbReference>
<dbReference type="PANTHER" id="PTHR43644:SF1">
    <property type="entry name" value="NAD(P)H-FLAVIN REDUCTASE"/>
    <property type="match status" value="1"/>
</dbReference>
<dbReference type="Pfam" id="PF00111">
    <property type="entry name" value="Fer2"/>
    <property type="match status" value="1"/>
</dbReference>
<dbReference type="Pfam" id="PF00175">
    <property type="entry name" value="NAD_binding_1"/>
    <property type="match status" value="1"/>
</dbReference>
<dbReference type="SUPFAM" id="SSF54292">
    <property type="entry name" value="2Fe-2S ferredoxin-like"/>
    <property type="match status" value="1"/>
</dbReference>
<dbReference type="SUPFAM" id="SSF52343">
    <property type="entry name" value="Ferredoxin reductase-like, C-terminal NADP-linked domain"/>
    <property type="match status" value="1"/>
</dbReference>
<dbReference type="SUPFAM" id="SSF63380">
    <property type="entry name" value="Riboflavin synthase domain-like"/>
    <property type="match status" value="1"/>
</dbReference>
<dbReference type="PROSITE" id="PS51085">
    <property type="entry name" value="2FE2S_FER_2"/>
    <property type="match status" value="1"/>
</dbReference>
<dbReference type="PROSITE" id="PS51384">
    <property type="entry name" value="FAD_FR"/>
    <property type="match status" value="1"/>
</dbReference>
<keyword id="KW-0001">2Fe-2S</keyword>
<keyword id="KW-0997">Cell inner membrane</keyword>
<keyword id="KW-1003">Cell membrane</keyword>
<keyword id="KW-0274">FAD</keyword>
<keyword id="KW-0285">Flavoprotein</keyword>
<keyword id="KW-0406">Ion transport</keyword>
<keyword id="KW-0408">Iron</keyword>
<keyword id="KW-0411">Iron-sulfur</keyword>
<keyword id="KW-0472">Membrane</keyword>
<keyword id="KW-0479">Metal-binding</keyword>
<keyword id="KW-0520">NAD</keyword>
<keyword id="KW-0915">Sodium</keyword>
<keyword id="KW-0739">Sodium transport</keyword>
<keyword id="KW-1278">Translocase</keyword>
<keyword id="KW-0812">Transmembrane</keyword>
<keyword id="KW-1133">Transmembrane helix</keyword>
<keyword id="KW-0813">Transport</keyword>
<keyword id="KW-0830">Ubiquinone</keyword>
<proteinExistence type="inferred from homology"/>